<gene>
    <name evidence="1" type="primary">tig</name>
    <name type="ordered locus">SUB0323</name>
</gene>
<keyword id="KW-0131">Cell cycle</keyword>
<keyword id="KW-0132">Cell division</keyword>
<keyword id="KW-0143">Chaperone</keyword>
<keyword id="KW-0963">Cytoplasm</keyword>
<keyword id="KW-0413">Isomerase</keyword>
<keyword id="KW-1185">Reference proteome</keyword>
<keyword id="KW-0697">Rotamase</keyword>
<proteinExistence type="inferred from homology"/>
<reference key="1">
    <citation type="journal article" date="2009" name="BMC Genomics">
        <title>Evidence for niche adaptation in the genome of the bovine pathogen Streptococcus uberis.</title>
        <authorList>
            <person name="Ward P.N."/>
            <person name="Holden M.T.G."/>
            <person name="Leigh J.A."/>
            <person name="Lennard N."/>
            <person name="Bignell A."/>
            <person name="Barron A."/>
            <person name="Clark L."/>
            <person name="Quail M.A."/>
            <person name="Woodward J."/>
            <person name="Barrell B.G."/>
            <person name="Egan S.A."/>
            <person name="Field T.R."/>
            <person name="Maskell D."/>
            <person name="Kehoe M."/>
            <person name="Dowson C.G."/>
            <person name="Chanter N."/>
            <person name="Whatmore A.M."/>
            <person name="Bentley S.D."/>
            <person name="Parkhill J."/>
        </authorList>
    </citation>
    <scope>NUCLEOTIDE SEQUENCE [LARGE SCALE GENOMIC DNA]</scope>
    <source>
        <strain>ATCC BAA-854 / 0140J</strain>
    </source>
</reference>
<comment type="function">
    <text evidence="1">Involved in protein export. Acts as a chaperone by maintaining the newly synthesized protein in an open conformation. Functions as a peptidyl-prolyl cis-trans isomerase.</text>
</comment>
<comment type="catalytic activity">
    <reaction evidence="1">
        <text>[protein]-peptidylproline (omega=180) = [protein]-peptidylproline (omega=0)</text>
        <dbReference type="Rhea" id="RHEA:16237"/>
        <dbReference type="Rhea" id="RHEA-COMP:10747"/>
        <dbReference type="Rhea" id="RHEA-COMP:10748"/>
        <dbReference type="ChEBI" id="CHEBI:83833"/>
        <dbReference type="ChEBI" id="CHEBI:83834"/>
        <dbReference type="EC" id="5.2.1.8"/>
    </reaction>
</comment>
<comment type="subcellular location">
    <subcellularLocation>
        <location>Cytoplasm</location>
    </subcellularLocation>
    <text evidence="1">About half TF is bound to the ribosome near the polypeptide exit tunnel while the other half is free in the cytoplasm.</text>
</comment>
<comment type="domain">
    <text evidence="1">Consists of 3 domains; the N-terminus binds the ribosome, the middle domain has PPIase activity, while the C-terminus has intrinsic chaperone activity on its own.</text>
</comment>
<comment type="similarity">
    <text evidence="1">Belongs to the FKBP-type PPIase family. Tig subfamily.</text>
</comment>
<feature type="chain" id="PRO_1000198183" description="Trigger factor">
    <location>
        <begin position="1"/>
        <end position="427"/>
    </location>
</feature>
<feature type="domain" description="PPIase FKBP-type" evidence="1">
    <location>
        <begin position="163"/>
        <end position="248"/>
    </location>
</feature>
<evidence type="ECO:0000255" key="1">
    <source>
        <dbReference type="HAMAP-Rule" id="MF_00303"/>
    </source>
</evidence>
<organism>
    <name type="scientific">Streptococcus uberis (strain ATCC BAA-854 / 0140J)</name>
    <dbReference type="NCBI Taxonomy" id="218495"/>
    <lineage>
        <taxon>Bacteria</taxon>
        <taxon>Bacillati</taxon>
        <taxon>Bacillota</taxon>
        <taxon>Bacilli</taxon>
        <taxon>Lactobacillales</taxon>
        <taxon>Streptococcaceae</taxon>
        <taxon>Streptococcus</taxon>
    </lineage>
</organism>
<name>TIG_STRU0</name>
<dbReference type="EC" id="5.2.1.8" evidence="1"/>
<dbReference type="EMBL" id="AM946015">
    <property type="protein sequence ID" value="CAR40892.1"/>
    <property type="molecule type" value="Genomic_DNA"/>
</dbReference>
<dbReference type="RefSeq" id="WP_012657865.1">
    <property type="nucleotide sequence ID" value="NC_012004.1"/>
</dbReference>
<dbReference type="SMR" id="B9DTJ5"/>
<dbReference type="STRING" id="218495.SUB0323"/>
<dbReference type="KEGG" id="sub:SUB0323"/>
<dbReference type="eggNOG" id="COG0544">
    <property type="taxonomic scope" value="Bacteria"/>
</dbReference>
<dbReference type="HOGENOM" id="CLU_033058_3_2_9"/>
<dbReference type="OrthoDB" id="9767721at2"/>
<dbReference type="Proteomes" id="UP000000449">
    <property type="component" value="Chromosome"/>
</dbReference>
<dbReference type="GO" id="GO:0005737">
    <property type="term" value="C:cytoplasm"/>
    <property type="evidence" value="ECO:0007669"/>
    <property type="project" value="UniProtKB-SubCell"/>
</dbReference>
<dbReference type="GO" id="GO:0003755">
    <property type="term" value="F:peptidyl-prolyl cis-trans isomerase activity"/>
    <property type="evidence" value="ECO:0007669"/>
    <property type="project" value="UniProtKB-UniRule"/>
</dbReference>
<dbReference type="GO" id="GO:0044183">
    <property type="term" value="F:protein folding chaperone"/>
    <property type="evidence" value="ECO:0007669"/>
    <property type="project" value="TreeGrafter"/>
</dbReference>
<dbReference type="GO" id="GO:0043022">
    <property type="term" value="F:ribosome binding"/>
    <property type="evidence" value="ECO:0007669"/>
    <property type="project" value="TreeGrafter"/>
</dbReference>
<dbReference type="GO" id="GO:0051083">
    <property type="term" value="P:'de novo' cotranslational protein folding"/>
    <property type="evidence" value="ECO:0007669"/>
    <property type="project" value="TreeGrafter"/>
</dbReference>
<dbReference type="GO" id="GO:0051301">
    <property type="term" value="P:cell division"/>
    <property type="evidence" value="ECO:0007669"/>
    <property type="project" value="UniProtKB-KW"/>
</dbReference>
<dbReference type="GO" id="GO:0061077">
    <property type="term" value="P:chaperone-mediated protein folding"/>
    <property type="evidence" value="ECO:0007669"/>
    <property type="project" value="TreeGrafter"/>
</dbReference>
<dbReference type="GO" id="GO:0015031">
    <property type="term" value="P:protein transport"/>
    <property type="evidence" value="ECO:0007669"/>
    <property type="project" value="UniProtKB-UniRule"/>
</dbReference>
<dbReference type="GO" id="GO:0043335">
    <property type="term" value="P:protein unfolding"/>
    <property type="evidence" value="ECO:0007669"/>
    <property type="project" value="TreeGrafter"/>
</dbReference>
<dbReference type="FunFam" id="3.10.50.40:FF:000001">
    <property type="entry name" value="Trigger factor"/>
    <property type="match status" value="1"/>
</dbReference>
<dbReference type="Gene3D" id="3.10.50.40">
    <property type="match status" value="1"/>
</dbReference>
<dbReference type="Gene3D" id="3.30.70.1050">
    <property type="entry name" value="Trigger factor ribosome-binding domain"/>
    <property type="match status" value="1"/>
</dbReference>
<dbReference type="Gene3D" id="1.10.3120.10">
    <property type="entry name" value="Trigger factor, C-terminal domain"/>
    <property type="match status" value="1"/>
</dbReference>
<dbReference type="HAMAP" id="MF_00303">
    <property type="entry name" value="Trigger_factor_Tig"/>
    <property type="match status" value="1"/>
</dbReference>
<dbReference type="InterPro" id="IPR046357">
    <property type="entry name" value="PPIase_dom_sf"/>
</dbReference>
<dbReference type="InterPro" id="IPR001179">
    <property type="entry name" value="PPIase_FKBP_dom"/>
</dbReference>
<dbReference type="InterPro" id="IPR005215">
    <property type="entry name" value="Trig_fac"/>
</dbReference>
<dbReference type="InterPro" id="IPR008880">
    <property type="entry name" value="Trigger_fac_C"/>
</dbReference>
<dbReference type="InterPro" id="IPR037041">
    <property type="entry name" value="Trigger_fac_C_sf"/>
</dbReference>
<dbReference type="InterPro" id="IPR008881">
    <property type="entry name" value="Trigger_fac_ribosome-bd_bac"/>
</dbReference>
<dbReference type="InterPro" id="IPR036611">
    <property type="entry name" value="Trigger_fac_ribosome-bd_sf"/>
</dbReference>
<dbReference type="InterPro" id="IPR027304">
    <property type="entry name" value="Trigger_fact/SurA_dom_sf"/>
</dbReference>
<dbReference type="NCBIfam" id="TIGR00115">
    <property type="entry name" value="tig"/>
    <property type="match status" value="1"/>
</dbReference>
<dbReference type="PANTHER" id="PTHR30560">
    <property type="entry name" value="TRIGGER FACTOR CHAPERONE AND PEPTIDYL-PROLYL CIS/TRANS ISOMERASE"/>
    <property type="match status" value="1"/>
</dbReference>
<dbReference type="PANTHER" id="PTHR30560:SF3">
    <property type="entry name" value="TRIGGER FACTOR-LIKE PROTEIN TIG, CHLOROPLASTIC"/>
    <property type="match status" value="1"/>
</dbReference>
<dbReference type="Pfam" id="PF00254">
    <property type="entry name" value="FKBP_C"/>
    <property type="match status" value="1"/>
</dbReference>
<dbReference type="Pfam" id="PF05698">
    <property type="entry name" value="Trigger_C"/>
    <property type="match status" value="1"/>
</dbReference>
<dbReference type="Pfam" id="PF05697">
    <property type="entry name" value="Trigger_N"/>
    <property type="match status" value="1"/>
</dbReference>
<dbReference type="PIRSF" id="PIRSF003095">
    <property type="entry name" value="Trigger_factor"/>
    <property type="match status" value="1"/>
</dbReference>
<dbReference type="SUPFAM" id="SSF54534">
    <property type="entry name" value="FKBP-like"/>
    <property type="match status" value="1"/>
</dbReference>
<dbReference type="SUPFAM" id="SSF109998">
    <property type="entry name" value="Triger factor/SurA peptide-binding domain-like"/>
    <property type="match status" value="1"/>
</dbReference>
<dbReference type="SUPFAM" id="SSF102735">
    <property type="entry name" value="Trigger factor ribosome-binding domain"/>
    <property type="match status" value="1"/>
</dbReference>
<dbReference type="PROSITE" id="PS50059">
    <property type="entry name" value="FKBP_PPIASE"/>
    <property type="match status" value="1"/>
</dbReference>
<sequence length="427" mass="47318">MSTSFENKATNRGVITFTIGQDKIKPALDQAFNKIKKDLNVPGFRKGHLPRPIFNQKFGEEVLYEDALNIVLPAAYEAAVAELDLAVVAQPKIDVVSMEKGKDWEISAEVVTKPEVKLGEYKDLAVEVEASKEVTDEEVDAKIERERQNLAELVVKEDAAVEGDTVVIDFVGSVDGVEFDGGKGENFSLELGSGQFIPGFEDQLVGTKAGETKNVEVTFPEDYQAEDLAGKAATFVTTVHEVKSKEVPALDDELAKDIDEEVETLDELKAKYRKELEAAKEIAFDDAVEGAAIELAVANAEIVELPEEMVHDEVHRAMNEFMGNMQRQGISPEMYFQLTGTTQEDLHKQYESEADKRVKTNLVIEAIAKAEGFEATDEEIEKEINDLATEYNMPVEQVRTLLSADMLKHDIAMKKAVEVITETVKVK</sequence>
<protein>
    <recommendedName>
        <fullName evidence="1">Trigger factor</fullName>
        <shortName evidence="1">TF</shortName>
        <ecNumber evidence="1">5.2.1.8</ecNumber>
    </recommendedName>
    <alternativeName>
        <fullName evidence="1">PPIase</fullName>
    </alternativeName>
</protein>
<accession>B9DTJ5</accession>